<reference key="1">
    <citation type="submission" date="2008-10" db="EMBL/GenBank/DDBJ databases">
        <title>Genome sequence of Bacillus cereus AH187.</title>
        <authorList>
            <person name="Dodson R.J."/>
            <person name="Durkin A.S."/>
            <person name="Rosovitz M.J."/>
            <person name="Rasko D.A."/>
            <person name="Kolsto A.B."/>
            <person name="Okstad O.A."/>
            <person name="Ravel J."/>
            <person name="Sutton G."/>
        </authorList>
    </citation>
    <scope>NUCLEOTIDE SEQUENCE [LARGE SCALE GENOMIC DNA]</scope>
    <source>
        <strain>AH187</strain>
    </source>
</reference>
<evidence type="ECO:0000255" key="1">
    <source>
        <dbReference type="HAMAP-Rule" id="MF_01867"/>
    </source>
</evidence>
<accession>B7HM40</accession>
<gene>
    <name evidence="1" type="primary">bshC</name>
    <name type="ordered locus">BCAH187_A3972</name>
</gene>
<feature type="chain" id="PRO_0000378208" description="Putative cysteine ligase BshC">
    <location>
        <begin position="1"/>
        <end position="538"/>
    </location>
</feature>
<feature type="coiled-coil region" evidence="1">
    <location>
        <begin position="460"/>
        <end position="484"/>
    </location>
</feature>
<sequence>MEIKEISVPQQGVVADYMNGKKEIQSCFDYMLTEDAFKQRVQDLREREFFRQDLVAHLLEYNTKLQAGEATIQNVKALEDEDTYVVIAGQQAGLLTGPLYTIHKIISVLQLAKEKEESLGVKVVPVFWIAGEDHDMDEINHTFVTKNKKIKKTIFHDRNPKKASASESELSLEDCRKWIEEIFKTYPETNFTKDVLRFIDDSLRKSNTYVDFFGHLIMKMFMNSGLILVDSHHPELRKLEVPFFKQIVSKYKEVQEGLHNQQEVIKELGYKPIIETKSNAVHIFMEIDNERVLLEDNQRKFVGKDGTYSFSYEELIEEMERSPERFSNNVVTRPLMQEYVFPTLAFIGGPGELAYWSELQQVFHAIGFRMPPVVPRITITYIERDIATDLHDLQLQESDPFLNNVDKLRENWLSNQIEEPIDERFEEAKKEIIDIHKSLQQFVKKIDPGLSSFAGKNEFKINEQIELLERMLKRNVEKKHEVELNKFRRIQFAIRPLGAPQERVWNVCYYLNQFGLDFVDRVMEKPFSWDGKHHVIKL</sequence>
<dbReference type="EC" id="6.-.-.-" evidence="1"/>
<dbReference type="EMBL" id="CP001177">
    <property type="protein sequence ID" value="ACJ80831.1"/>
    <property type="molecule type" value="Genomic_DNA"/>
</dbReference>
<dbReference type="SMR" id="B7HM40"/>
<dbReference type="KEGG" id="bcr:BCAH187_A3972"/>
<dbReference type="HOGENOM" id="CLU_022249_1_0_9"/>
<dbReference type="Proteomes" id="UP000002214">
    <property type="component" value="Chromosome"/>
</dbReference>
<dbReference type="GO" id="GO:0016874">
    <property type="term" value="F:ligase activity"/>
    <property type="evidence" value="ECO:0007669"/>
    <property type="project" value="UniProtKB-UniRule"/>
</dbReference>
<dbReference type="HAMAP" id="MF_01867">
    <property type="entry name" value="BshC"/>
    <property type="match status" value="1"/>
</dbReference>
<dbReference type="InterPro" id="IPR011199">
    <property type="entry name" value="Bacillithiol_biosynth_BshC"/>
</dbReference>
<dbReference type="InterPro" id="IPR055399">
    <property type="entry name" value="CC_BshC"/>
</dbReference>
<dbReference type="InterPro" id="IPR055398">
    <property type="entry name" value="Rossmann-like_BshC"/>
</dbReference>
<dbReference type="NCBIfam" id="TIGR03998">
    <property type="entry name" value="thiol_BshC"/>
    <property type="match status" value="1"/>
</dbReference>
<dbReference type="Pfam" id="PF24850">
    <property type="entry name" value="CC_BshC"/>
    <property type="match status" value="1"/>
</dbReference>
<dbReference type="Pfam" id="PF10079">
    <property type="entry name" value="Rossmann-like_BshC"/>
    <property type="match status" value="1"/>
</dbReference>
<dbReference type="PIRSF" id="PIRSF012535">
    <property type="entry name" value="UCP012535"/>
    <property type="match status" value="1"/>
</dbReference>
<comment type="function">
    <text evidence="1">Involved in bacillithiol (BSH) biosynthesis. May catalyze the last step of the pathway, the addition of cysteine to glucosamine malate (GlcN-Mal) to generate BSH.</text>
</comment>
<comment type="similarity">
    <text evidence="1">Belongs to the BshC family.</text>
</comment>
<name>BSHC_BACC7</name>
<organism>
    <name type="scientific">Bacillus cereus (strain AH187)</name>
    <dbReference type="NCBI Taxonomy" id="405534"/>
    <lineage>
        <taxon>Bacteria</taxon>
        <taxon>Bacillati</taxon>
        <taxon>Bacillota</taxon>
        <taxon>Bacilli</taxon>
        <taxon>Bacillales</taxon>
        <taxon>Bacillaceae</taxon>
        <taxon>Bacillus</taxon>
        <taxon>Bacillus cereus group</taxon>
    </lineage>
</organism>
<proteinExistence type="inferred from homology"/>
<protein>
    <recommendedName>
        <fullName evidence="1">Putative cysteine ligase BshC</fullName>
        <ecNumber evidence="1">6.-.-.-</ecNumber>
    </recommendedName>
</protein>
<keyword id="KW-0175">Coiled coil</keyword>
<keyword id="KW-0436">Ligase</keyword>